<evidence type="ECO:0000255" key="1">
    <source>
        <dbReference type="HAMAP-Rule" id="MF_00323"/>
    </source>
</evidence>
<gene>
    <name evidence="1" type="primary">hemH</name>
    <name type="ordered locus">P9215_06061</name>
</gene>
<sequence>MDKIGVLLMNLGGPERINDVGPFLYNLFSDPEIIRIPFPVFQKPLAWLISTLRSTTSQQAYLSIGGGSPIRRITEQQARELQSKLRDKGLNATTYIAMRYWHPFTESAIADMKADGIDQVVVIPLYPHFSISTSGSSFRELKKLRDSDDEFKKVPMRCVRSWYSQSDYLKSMVELISEQISLCESPSKAHIFFTAHGVPKSYVEEAGDPYKQQIEDCSLLIINELEKCLGHSNPHTLSYQSRVGPVEWLKPYTEEVLADLGRSNVNDLIVVPISFVGEHIETLQEIDIEYKEIAEQAGIKNFRRVKALNTHPTFIEGLSDLVISCLEGPLVNLEEASQLPEKVKLYPQEKWQWGWNNSSEVWNGRVAMIIFLVLFIELISGSGPLHKLGIL</sequence>
<accession>A8G3P0</accession>
<organism>
    <name type="scientific">Prochlorococcus marinus (strain MIT 9215)</name>
    <dbReference type="NCBI Taxonomy" id="93060"/>
    <lineage>
        <taxon>Bacteria</taxon>
        <taxon>Bacillati</taxon>
        <taxon>Cyanobacteriota</taxon>
        <taxon>Cyanophyceae</taxon>
        <taxon>Synechococcales</taxon>
        <taxon>Prochlorococcaceae</taxon>
        <taxon>Prochlorococcus</taxon>
    </lineage>
</organism>
<feature type="chain" id="PRO_1000059486" description="Ferrochelatase">
    <location>
        <begin position="1"/>
        <end position="391"/>
    </location>
</feature>
<feature type="binding site" evidence="1">
    <location>
        <position position="196"/>
    </location>
    <ligand>
        <name>Fe cation</name>
        <dbReference type="ChEBI" id="CHEBI:24875"/>
    </ligand>
</feature>
<feature type="binding site" evidence="1">
    <location>
        <position position="281"/>
    </location>
    <ligand>
        <name>Fe cation</name>
        <dbReference type="ChEBI" id="CHEBI:24875"/>
    </ligand>
</feature>
<protein>
    <recommendedName>
        <fullName evidence="1">Ferrochelatase</fullName>
        <ecNumber evidence="1">4.98.1.1</ecNumber>
    </recommendedName>
    <alternativeName>
        <fullName evidence="1">Heme synthase</fullName>
    </alternativeName>
    <alternativeName>
        <fullName evidence="1">Protoheme ferro-lyase</fullName>
    </alternativeName>
</protein>
<reference key="1">
    <citation type="journal article" date="2007" name="PLoS Genet.">
        <title>Patterns and implications of gene gain and loss in the evolution of Prochlorococcus.</title>
        <authorList>
            <person name="Kettler G.C."/>
            <person name="Martiny A.C."/>
            <person name="Huang K."/>
            <person name="Zucker J."/>
            <person name="Coleman M.L."/>
            <person name="Rodrigue S."/>
            <person name="Chen F."/>
            <person name="Lapidus A."/>
            <person name="Ferriera S."/>
            <person name="Johnson J."/>
            <person name="Steglich C."/>
            <person name="Church G.M."/>
            <person name="Richardson P."/>
            <person name="Chisholm S.W."/>
        </authorList>
    </citation>
    <scope>NUCLEOTIDE SEQUENCE [LARGE SCALE GENOMIC DNA]</scope>
    <source>
        <strain>MIT 9215</strain>
    </source>
</reference>
<comment type="function">
    <text evidence="1">Catalyzes the ferrous insertion into protoporphyrin IX.</text>
</comment>
<comment type="catalytic activity">
    <reaction evidence="1">
        <text>heme b + 2 H(+) = protoporphyrin IX + Fe(2+)</text>
        <dbReference type="Rhea" id="RHEA:22584"/>
        <dbReference type="ChEBI" id="CHEBI:15378"/>
        <dbReference type="ChEBI" id="CHEBI:29033"/>
        <dbReference type="ChEBI" id="CHEBI:57306"/>
        <dbReference type="ChEBI" id="CHEBI:60344"/>
        <dbReference type="EC" id="4.98.1.1"/>
    </reaction>
</comment>
<comment type="pathway">
    <text evidence="1">Porphyrin-containing compound metabolism; protoheme biosynthesis; protoheme from protoporphyrin-IX: step 1/1.</text>
</comment>
<comment type="subcellular location">
    <subcellularLocation>
        <location evidence="1">Cytoplasm</location>
    </subcellularLocation>
</comment>
<comment type="similarity">
    <text evidence="1">Belongs to the ferrochelatase family.</text>
</comment>
<keyword id="KW-0963">Cytoplasm</keyword>
<keyword id="KW-0350">Heme biosynthesis</keyword>
<keyword id="KW-0408">Iron</keyword>
<keyword id="KW-0456">Lyase</keyword>
<keyword id="KW-0479">Metal-binding</keyword>
<keyword id="KW-0627">Porphyrin biosynthesis</keyword>
<name>HEMH_PROM2</name>
<dbReference type="EC" id="4.98.1.1" evidence="1"/>
<dbReference type="EMBL" id="CP000825">
    <property type="protein sequence ID" value="ABV50221.1"/>
    <property type="molecule type" value="Genomic_DNA"/>
</dbReference>
<dbReference type="RefSeq" id="WP_012007347.1">
    <property type="nucleotide sequence ID" value="NC_009840.1"/>
</dbReference>
<dbReference type="SMR" id="A8G3P0"/>
<dbReference type="STRING" id="93060.P9215_06061"/>
<dbReference type="KEGG" id="pmh:P9215_06061"/>
<dbReference type="eggNOG" id="COG0276">
    <property type="taxonomic scope" value="Bacteria"/>
</dbReference>
<dbReference type="HOGENOM" id="CLU_018884_4_3_3"/>
<dbReference type="OrthoDB" id="9809741at2"/>
<dbReference type="UniPathway" id="UPA00252">
    <property type="reaction ID" value="UER00325"/>
</dbReference>
<dbReference type="Proteomes" id="UP000002014">
    <property type="component" value="Chromosome"/>
</dbReference>
<dbReference type="GO" id="GO:0005737">
    <property type="term" value="C:cytoplasm"/>
    <property type="evidence" value="ECO:0007669"/>
    <property type="project" value="UniProtKB-SubCell"/>
</dbReference>
<dbReference type="GO" id="GO:0004325">
    <property type="term" value="F:ferrochelatase activity"/>
    <property type="evidence" value="ECO:0007669"/>
    <property type="project" value="UniProtKB-UniRule"/>
</dbReference>
<dbReference type="GO" id="GO:0046872">
    <property type="term" value="F:metal ion binding"/>
    <property type="evidence" value="ECO:0007669"/>
    <property type="project" value="UniProtKB-KW"/>
</dbReference>
<dbReference type="GO" id="GO:0006783">
    <property type="term" value="P:heme biosynthetic process"/>
    <property type="evidence" value="ECO:0007669"/>
    <property type="project" value="UniProtKB-UniRule"/>
</dbReference>
<dbReference type="CDD" id="cd00419">
    <property type="entry name" value="Ferrochelatase_C"/>
    <property type="match status" value="1"/>
</dbReference>
<dbReference type="CDD" id="cd03411">
    <property type="entry name" value="Ferrochelatase_N"/>
    <property type="match status" value="1"/>
</dbReference>
<dbReference type="FunFam" id="3.40.50.1400:FF:000006">
    <property type="entry name" value="Ferrochelatase"/>
    <property type="match status" value="1"/>
</dbReference>
<dbReference type="Gene3D" id="3.40.50.1400">
    <property type="match status" value="2"/>
</dbReference>
<dbReference type="HAMAP" id="MF_00323">
    <property type="entry name" value="Ferrochelatase"/>
    <property type="match status" value="1"/>
</dbReference>
<dbReference type="InterPro" id="IPR001015">
    <property type="entry name" value="Ferrochelatase"/>
</dbReference>
<dbReference type="InterPro" id="IPR019772">
    <property type="entry name" value="Ferrochelatase_AS"/>
</dbReference>
<dbReference type="InterPro" id="IPR033644">
    <property type="entry name" value="Ferrochelatase_C"/>
</dbReference>
<dbReference type="InterPro" id="IPR033659">
    <property type="entry name" value="Ferrochelatase_N"/>
</dbReference>
<dbReference type="NCBIfam" id="TIGR00109">
    <property type="entry name" value="hemH"/>
    <property type="match status" value="1"/>
</dbReference>
<dbReference type="PANTHER" id="PTHR11108">
    <property type="entry name" value="FERROCHELATASE"/>
    <property type="match status" value="1"/>
</dbReference>
<dbReference type="PANTHER" id="PTHR11108:SF1">
    <property type="entry name" value="FERROCHELATASE, MITOCHONDRIAL"/>
    <property type="match status" value="1"/>
</dbReference>
<dbReference type="Pfam" id="PF00762">
    <property type="entry name" value="Ferrochelatase"/>
    <property type="match status" value="1"/>
</dbReference>
<dbReference type="SUPFAM" id="SSF53800">
    <property type="entry name" value="Chelatase"/>
    <property type="match status" value="1"/>
</dbReference>
<dbReference type="SUPFAM" id="SSF103511">
    <property type="entry name" value="Chlorophyll a-b binding protein"/>
    <property type="match status" value="1"/>
</dbReference>
<dbReference type="PROSITE" id="PS00534">
    <property type="entry name" value="FERROCHELATASE"/>
    <property type="match status" value="1"/>
</dbReference>
<proteinExistence type="inferred from homology"/>